<feature type="chain" id="PRO_0000367235" description="UPF0173 metal-dependent hydrolase Mhun_1705">
    <location>
        <begin position="1"/>
        <end position="219"/>
    </location>
</feature>
<gene>
    <name type="ordered locus">Mhun_1705</name>
</gene>
<keyword id="KW-0378">Hydrolase</keyword>
<keyword id="KW-1185">Reference proteome</keyword>
<dbReference type="EMBL" id="CP000254">
    <property type="protein sequence ID" value="ABD41428.1"/>
    <property type="molecule type" value="Genomic_DNA"/>
</dbReference>
<dbReference type="RefSeq" id="WP_011448693.1">
    <property type="nucleotide sequence ID" value="NC_007796.1"/>
</dbReference>
<dbReference type="SMR" id="Q2FR07"/>
<dbReference type="STRING" id="323259.Mhun_1705"/>
<dbReference type="EnsemblBacteria" id="ABD41428">
    <property type="protein sequence ID" value="ABD41428"/>
    <property type="gene ID" value="Mhun_1705"/>
</dbReference>
<dbReference type="GeneID" id="3924912"/>
<dbReference type="KEGG" id="mhu:Mhun_1705"/>
<dbReference type="eggNOG" id="arCOG00497">
    <property type="taxonomic scope" value="Archaea"/>
</dbReference>
<dbReference type="HOGENOM" id="CLU_070010_4_0_2"/>
<dbReference type="InParanoid" id="Q2FR07"/>
<dbReference type="OrthoDB" id="28313at2157"/>
<dbReference type="Proteomes" id="UP000001941">
    <property type="component" value="Chromosome"/>
</dbReference>
<dbReference type="GO" id="GO:0016787">
    <property type="term" value="F:hydrolase activity"/>
    <property type="evidence" value="ECO:0007669"/>
    <property type="project" value="UniProtKB-UniRule"/>
</dbReference>
<dbReference type="Gene3D" id="3.60.15.10">
    <property type="entry name" value="Ribonuclease Z/Hydroxyacylglutathione hydrolase-like"/>
    <property type="match status" value="1"/>
</dbReference>
<dbReference type="HAMAP" id="MF_00457">
    <property type="entry name" value="UPF0173"/>
    <property type="match status" value="1"/>
</dbReference>
<dbReference type="InterPro" id="IPR001279">
    <property type="entry name" value="Metallo-B-lactamas"/>
</dbReference>
<dbReference type="InterPro" id="IPR036866">
    <property type="entry name" value="RibonucZ/Hydroxyglut_hydro"/>
</dbReference>
<dbReference type="InterPro" id="IPR022877">
    <property type="entry name" value="UPF0173"/>
</dbReference>
<dbReference type="InterPro" id="IPR050114">
    <property type="entry name" value="UPF0173_UPF0282_UlaG_hydrolase"/>
</dbReference>
<dbReference type="NCBIfam" id="NF001911">
    <property type="entry name" value="PRK00685.1"/>
    <property type="match status" value="1"/>
</dbReference>
<dbReference type="PANTHER" id="PTHR43546:SF3">
    <property type="entry name" value="UPF0173 METAL-DEPENDENT HYDROLASE MJ1163"/>
    <property type="match status" value="1"/>
</dbReference>
<dbReference type="PANTHER" id="PTHR43546">
    <property type="entry name" value="UPF0173 METAL-DEPENDENT HYDROLASE MJ1163-RELATED"/>
    <property type="match status" value="1"/>
</dbReference>
<dbReference type="Pfam" id="PF13483">
    <property type="entry name" value="Lactamase_B_3"/>
    <property type="match status" value="1"/>
</dbReference>
<dbReference type="SMART" id="SM00849">
    <property type="entry name" value="Lactamase_B"/>
    <property type="match status" value="1"/>
</dbReference>
<dbReference type="SUPFAM" id="SSF56281">
    <property type="entry name" value="Metallo-hydrolase/oxidoreductase"/>
    <property type="match status" value="1"/>
</dbReference>
<name>Y1705_METHJ</name>
<sequence length="219" mass="23748">MKITYLGHACVVLQGSKCVLIDPFIPEGEIRVTPDLVAVTHAHADHMGIAASYTAPIITNNEIAHYLRGKGCITEAMNIGGTIVVDGISFTMTQAIHSSWLEDEGIGMYGGSAAGFVISMDGRTVYHAGDTGLFSDMRLIGELYHPDVALIPIGGRFTMGPREGMMAAEFIGAPVVIPIHYNTFDKIRQDVSEFARAINETTDMKTVILEPGMEYEIKK</sequence>
<protein>
    <recommendedName>
        <fullName evidence="1">UPF0173 metal-dependent hydrolase Mhun_1705</fullName>
    </recommendedName>
</protein>
<proteinExistence type="inferred from homology"/>
<evidence type="ECO:0000255" key="1">
    <source>
        <dbReference type="HAMAP-Rule" id="MF_00457"/>
    </source>
</evidence>
<accession>Q2FR07</accession>
<organism>
    <name type="scientific">Methanospirillum hungatei JF-1 (strain ATCC 27890 / DSM 864 / NBRC 100397 / JF-1)</name>
    <dbReference type="NCBI Taxonomy" id="323259"/>
    <lineage>
        <taxon>Archaea</taxon>
        <taxon>Methanobacteriati</taxon>
        <taxon>Methanobacteriota</taxon>
        <taxon>Stenosarchaea group</taxon>
        <taxon>Methanomicrobia</taxon>
        <taxon>Methanomicrobiales</taxon>
        <taxon>Methanospirillaceae</taxon>
        <taxon>Methanospirillum</taxon>
    </lineage>
</organism>
<comment type="similarity">
    <text evidence="1">Belongs to the UPF0173 family.</text>
</comment>
<reference key="1">
    <citation type="journal article" date="2016" name="Stand. Genomic Sci.">
        <title>Complete genome sequence of Methanospirillum hungatei type strain JF1.</title>
        <authorList>
            <person name="Gunsalus R.P."/>
            <person name="Cook L.E."/>
            <person name="Crable B."/>
            <person name="Rohlin L."/>
            <person name="McDonald E."/>
            <person name="Mouttaki H."/>
            <person name="Sieber J.R."/>
            <person name="Poweleit N."/>
            <person name="Zhou H."/>
            <person name="Lapidus A.L."/>
            <person name="Daligault H.E."/>
            <person name="Land M."/>
            <person name="Gilna P."/>
            <person name="Ivanova N."/>
            <person name="Kyrpides N."/>
            <person name="Culley D.E."/>
            <person name="McInerney M.J."/>
        </authorList>
    </citation>
    <scope>NUCLEOTIDE SEQUENCE [LARGE SCALE GENOMIC DNA]</scope>
    <source>
        <strain>ATCC 27890 / DSM 864 / NBRC 100397 / JF-1</strain>
    </source>
</reference>